<sequence>MPRGFLVKRSKKSTPVSYRVRGGEDSDRALLLSPGCGGARAEPPVPSPGPLPPPPPPALAERAHAALAAALACAPGPPPPPPPGPRAAHFGNPEAAHPAPLYSPTRPVSREHEKHKYFERSFNLGSPVSAESFPTPAALLAGGGSGANGAGGGGGGTCGGDALLFAPAELKMGTAFSAGAEAARGPGTGPPLSPAAALRPPGKRPAPPAAVATEPPAKAAKAPSAKKPKAIRKLHFEDEVTTSPVLGLKIKEGPVEAPRGRAGGATRPLGEFICQLCKEEYADPFALAQHKCSRIVRVEYRCPECAKVFSCPANLASHRRWHKPRPVPAAARAPEPEAATRAEAREAAGGGSSDRDTPSPGGVSESGSEDGLYECHHCAKKFRRQAYLRKHLLAHHQALQAKGAPPPPPPPPPPAEDILAFYAGPDEKAPQEASGDGEAAGVLGLSATAQCHLCPVCGETFPSKGAQERHLRLLHAAQVFPCKYCPATFYSSPGLTRHINKCHPSENRQVILLQVPVRPAC</sequence>
<name>INSM1_MOUSE</name>
<accession>Q63ZV0</accession>
<accession>Q9Z113</accession>
<feature type="chain" id="PRO_0000047269" description="Insulinoma-associated protein 1">
    <location>
        <begin position="1"/>
        <end position="521"/>
    </location>
</feature>
<feature type="zinc finger region" description="C2H2-type 1; atypical" evidence="3">
    <location>
        <begin position="272"/>
        <end position="292"/>
    </location>
</feature>
<feature type="zinc finger region" description="C2H2-type 2" evidence="3">
    <location>
        <begin position="300"/>
        <end position="322"/>
    </location>
</feature>
<feature type="zinc finger region" description="C2H2-type 3" evidence="3">
    <location>
        <begin position="373"/>
        <end position="395"/>
    </location>
</feature>
<feature type="zinc finger region" description="C2H2-type 4" evidence="3">
    <location>
        <begin position="452"/>
        <end position="475"/>
    </location>
</feature>
<feature type="zinc finger region" description="C2H2-type 5" evidence="3">
    <location>
        <begin position="480"/>
        <end position="503"/>
    </location>
</feature>
<feature type="region of interest" description="Disordered" evidence="4">
    <location>
        <begin position="1"/>
        <end position="59"/>
    </location>
</feature>
<feature type="region of interest" description="SNAG domain" evidence="13">
    <location>
        <begin position="1"/>
        <end position="20"/>
    </location>
</feature>
<feature type="region of interest" description="Required and sufficient for interaction with KDM1A" evidence="2">
    <location>
        <begin position="2"/>
        <end position="7"/>
    </location>
</feature>
<feature type="region of interest" description="Necessary for interaction with CCND1" evidence="1">
    <location>
        <begin position="43"/>
        <end position="56"/>
    </location>
</feature>
<feature type="region of interest" description="Disordered" evidence="4">
    <location>
        <begin position="76"/>
        <end position="107"/>
    </location>
</feature>
<feature type="region of interest" description="Disordered" evidence="4">
    <location>
        <begin position="180"/>
        <end position="230"/>
    </location>
</feature>
<feature type="region of interest" description="Disordered" evidence="4">
    <location>
        <begin position="320"/>
        <end position="369"/>
    </location>
</feature>
<feature type="region of interest" description="Disordered" evidence="4">
    <location>
        <begin position="398"/>
        <end position="419"/>
    </location>
</feature>
<feature type="compositionally biased region" description="Basic residues" evidence="4">
    <location>
        <begin position="1"/>
        <end position="12"/>
    </location>
</feature>
<feature type="compositionally biased region" description="Pro residues" evidence="4">
    <location>
        <begin position="43"/>
        <end position="58"/>
    </location>
</feature>
<feature type="compositionally biased region" description="Pro residues" evidence="4">
    <location>
        <begin position="76"/>
        <end position="85"/>
    </location>
</feature>
<feature type="compositionally biased region" description="Low complexity" evidence="4">
    <location>
        <begin position="209"/>
        <end position="223"/>
    </location>
</feature>
<feature type="compositionally biased region" description="Basic and acidic residues" evidence="4">
    <location>
        <begin position="334"/>
        <end position="346"/>
    </location>
</feature>
<feature type="compositionally biased region" description="Pro residues" evidence="4">
    <location>
        <begin position="404"/>
        <end position="415"/>
    </location>
</feature>
<feature type="sequence conflict" description="In Ref. 1; AAD15718." evidence="12" ref="1">
    <original>L</original>
    <variation>R</variation>
    <location>
        <position position="59"/>
    </location>
</feature>
<feature type="sequence conflict" description="In Ref. 1; AAD15718." evidence="12" ref="1">
    <original>V</original>
    <variation>L</variation>
    <location>
        <position position="255"/>
    </location>
</feature>
<feature type="sequence conflict" description="In Ref. 1; AAD15718." evidence="12" ref="1">
    <original>T</original>
    <variation>A</variation>
    <location>
        <position position="266"/>
    </location>
</feature>
<feature type="sequence conflict" description="In Ref. 1." evidence="12" ref="1">
    <original>R</original>
    <variation>G</variation>
    <location>
        <position position="332"/>
    </location>
</feature>
<feature type="sequence conflict" description="In Ref. 1." evidence="12" ref="1">
    <original>S</original>
    <variation>T</variation>
    <location>
        <position position="353"/>
    </location>
</feature>
<feature type="sequence conflict" description="In Ref. 1." evidence="12" ref="1">
    <original>G</original>
    <variation>R</variation>
    <location>
        <position position="371"/>
    </location>
</feature>
<feature type="sequence conflict" description="In Ref. 1; AAD15718." evidence="12" ref="1">
    <original>Q</original>
    <variation>H</variation>
    <location>
        <position position="431"/>
    </location>
</feature>
<feature type="sequence conflict" description="In Ref. 1; AAD15718." evidence="12" ref="1">
    <original>G</original>
    <variation>S</variation>
    <location>
        <position position="437"/>
    </location>
</feature>
<feature type="sequence conflict" description="In Ref. 1; AAD15718." evidence="12" ref="1">
    <original>S</original>
    <variation>N</variation>
    <location>
        <position position="446"/>
    </location>
</feature>
<feature type="sequence conflict" description="In Ref. 1; AAD15718." evidence="12" ref="1">
    <original>CPV</original>
    <variation>FPL</variation>
    <location>
        <begin position="454"/>
        <end position="456"/>
    </location>
</feature>
<feature type="sequence conflict" description="In Ref. 1; AAD15718." evidence="12" ref="1">
    <original>S</original>
    <variation>T</variation>
    <location>
        <position position="463"/>
    </location>
</feature>
<proteinExistence type="evidence at protein level"/>
<gene>
    <name type="primary">Insm1</name>
    <name type="synonym">Ia1</name>
</gene>
<dbReference type="EMBL" id="AF044669">
    <property type="protein sequence ID" value="AAD15718.1"/>
    <property type="status" value="ALT_FRAME"/>
    <property type="molecule type" value="mRNA"/>
</dbReference>
<dbReference type="EMBL" id="BC082809">
    <property type="protein sequence ID" value="AAH82809.1"/>
    <property type="molecule type" value="mRNA"/>
</dbReference>
<dbReference type="CCDS" id="CCDS16830.1"/>
<dbReference type="RefSeq" id="NP_058585.2">
    <property type="nucleotide sequence ID" value="NM_016889.4"/>
</dbReference>
<dbReference type="BioGRID" id="207343">
    <property type="interactions" value="3"/>
</dbReference>
<dbReference type="FunCoup" id="Q63ZV0">
    <property type="interactions" value="274"/>
</dbReference>
<dbReference type="STRING" id="10090.ENSMUSP00000092048"/>
<dbReference type="GlyGen" id="Q63ZV0">
    <property type="glycosylation" value="1 site"/>
</dbReference>
<dbReference type="iPTMnet" id="Q63ZV0"/>
<dbReference type="PhosphoSitePlus" id="Q63ZV0"/>
<dbReference type="PaxDb" id="10090-ENSMUSP00000092048"/>
<dbReference type="ProteomicsDB" id="269066"/>
<dbReference type="Antibodypedia" id="9637">
    <property type="antibodies" value="124 antibodies from 28 providers"/>
</dbReference>
<dbReference type="DNASU" id="53626"/>
<dbReference type="Ensembl" id="ENSMUST00000089257.6">
    <property type="protein sequence ID" value="ENSMUSP00000092048.4"/>
    <property type="gene ID" value="ENSMUSG00000068154.6"/>
</dbReference>
<dbReference type="GeneID" id="53626"/>
<dbReference type="KEGG" id="mmu:53626"/>
<dbReference type="UCSC" id="uc008msh.2">
    <property type="organism name" value="mouse"/>
</dbReference>
<dbReference type="AGR" id="MGI:1859980"/>
<dbReference type="CTD" id="3642"/>
<dbReference type="MGI" id="MGI:1859980">
    <property type="gene designation" value="Insm1"/>
</dbReference>
<dbReference type="VEuPathDB" id="HostDB:ENSMUSG00000068154"/>
<dbReference type="eggNOG" id="KOG3993">
    <property type="taxonomic scope" value="Eukaryota"/>
</dbReference>
<dbReference type="GeneTree" id="ENSGT00940000162552"/>
<dbReference type="HOGENOM" id="CLU_033476_1_0_1"/>
<dbReference type="InParanoid" id="Q63ZV0"/>
<dbReference type="OMA" id="REHEKHK"/>
<dbReference type="OrthoDB" id="8953942at2759"/>
<dbReference type="PhylomeDB" id="Q63ZV0"/>
<dbReference type="TreeFam" id="TF320538"/>
<dbReference type="BioGRID-ORCS" id="53626">
    <property type="hits" value="0 hits in 79 CRISPR screens"/>
</dbReference>
<dbReference type="ChiTaRS" id="Insm1">
    <property type="organism name" value="mouse"/>
</dbReference>
<dbReference type="PRO" id="PR:Q63ZV0"/>
<dbReference type="Proteomes" id="UP000000589">
    <property type="component" value="Chromosome 2"/>
</dbReference>
<dbReference type="RNAct" id="Q63ZV0">
    <property type="molecule type" value="protein"/>
</dbReference>
<dbReference type="Bgee" id="ENSMUSG00000068154">
    <property type="expression patterns" value="Expressed in medial ganglionic eminence and 146 other cell types or tissues"/>
</dbReference>
<dbReference type="ExpressionAtlas" id="Q63ZV0">
    <property type="expression patterns" value="baseline and differential"/>
</dbReference>
<dbReference type="GO" id="GO:0005634">
    <property type="term" value="C:nucleus"/>
    <property type="evidence" value="ECO:0000314"/>
    <property type="project" value="MGI"/>
</dbReference>
<dbReference type="GO" id="GO:0017053">
    <property type="term" value="C:transcription repressor complex"/>
    <property type="evidence" value="ECO:0000250"/>
    <property type="project" value="UniProtKB"/>
</dbReference>
<dbReference type="GO" id="GO:0031490">
    <property type="term" value="F:chromatin DNA binding"/>
    <property type="evidence" value="ECO:0000250"/>
    <property type="project" value="UniProtKB"/>
</dbReference>
<dbReference type="GO" id="GO:0030332">
    <property type="term" value="F:cyclin binding"/>
    <property type="evidence" value="ECO:0007669"/>
    <property type="project" value="Ensembl"/>
</dbReference>
<dbReference type="GO" id="GO:0003700">
    <property type="term" value="F:DNA-binding transcription factor activity"/>
    <property type="evidence" value="ECO:0000250"/>
    <property type="project" value="UniProtKB"/>
</dbReference>
<dbReference type="GO" id="GO:0001227">
    <property type="term" value="F:DNA-binding transcription repressor activity, RNA polymerase II-specific"/>
    <property type="evidence" value="ECO:0007669"/>
    <property type="project" value="Ensembl"/>
</dbReference>
<dbReference type="GO" id="GO:0042826">
    <property type="term" value="F:histone deacetylase binding"/>
    <property type="evidence" value="ECO:0007669"/>
    <property type="project" value="Ensembl"/>
</dbReference>
<dbReference type="GO" id="GO:0000978">
    <property type="term" value="F:RNA polymerase II cis-regulatory region sequence-specific DNA binding"/>
    <property type="evidence" value="ECO:0007669"/>
    <property type="project" value="Ensembl"/>
</dbReference>
<dbReference type="GO" id="GO:0008270">
    <property type="term" value="F:zinc ion binding"/>
    <property type="evidence" value="ECO:0007669"/>
    <property type="project" value="UniProtKB-KW"/>
</dbReference>
<dbReference type="GO" id="GO:0061104">
    <property type="term" value="P:adrenal chromaffin cell differentiation"/>
    <property type="evidence" value="ECO:0000315"/>
    <property type="project" value="UniProtKB"/>
</dbReference>
<dbReference type="GO" id="GO:0016477">
    <property type="term" value="P:cell migration"/>
    <property type="evidence" value="ECO:0000315"/>
    <property type="project" value="MGI"/>
</dbReference>
<dbReference type="GO" id="GO:0008283">
    <property type="term" value="P:cell population proliferation"/>
    <property type="evidence" value="ECO:0000315"/>
    <property type="project" value="MGI"/>
</dbReference>
<dbReference type="GO" id="GO:0031018">
    <property type="term" value="P:endocrine pancreas development"/>
    <property type="evidence" value="ECO:0000315"/>
    <property type="project" value="MGI"/>
</dbReference>
<dbReference type="GO" id="GO:0035270">
    <property type="term" value="P:endocrine system development"/>
    <property type="evidence" value="ECO:0000315"/>
    <property type="project" value="MGI"/>
</dbReference>
<dbReference type="GO" id="GO:0008285">
    <property type="term" value="P:negative regulation of cell population proliferation"/>
    <property type="evidence" value="ECO:0000250"/>
    <property type="project" value="UniProtKB"/>
</dbReference>
<dbReference type="GO" id="GO:0001933">
    <property type="term" value="P:negative regulation of protein phosphorylation"/>
    <property type="evidence" value="ECO:0000250"/>
    <property type="project" value="UniProtKB"/>
</dbReference>
<dbReference type="GO" id="GO:0000122">
    <property type="term" value="P:negative regulation of transcription by RNA polymerase II"/>
    <property type="evidence" value="ECO:0000250"/>
    <property type="project" value="UniProtKB"/>
</dbReference>
<dbReference type="GO" id="GO:0003358">
    <property type="term" value="P:noradrenergic neuron development"/>
    <property type="evidence" value="ECO:0000315"/>
    <property type="project" value="UniProtKB"/>
</dbReference>
<dbReference type="GO" id="GO:0042421">
    <property type="term" value="P:norepinephrine biosynthetic process"/>
    <property type="evidence" value="ECO:0000315"/>
    <property type="project" value="UniProtKB"/>
</dbReference>
<dbReference type="GO" id="GO:0003310">
    <property type="term" value="P:pancreatic A cell differentiation"/>
    <property type="evidence" value="ECO:0000314"/>
    <property type="project" value="UniProtKB"/>
</dbReference>
<dbReference type="GO" id="GO:0045597">
    <property type="term" value="P:positive regulation of cell differentiation"/>
    <property type="evidence" value="ECO:0000315"/>
    <property type="project" value="UniProtKB"/>
</dbReference>
<dbReference type="GO" id="GO:0030335">
    <property type="term" value="P:positive regulation of cell migration"/>
    <property type="evidence" value="ECO:0000315"/>
    <property type="project" value="MGI"/>
</dbReference>
<dbReference type="GO" id="GO:0008284">
    <property type="term" value="P:positive regulation of cell population proliferation"/>
    <property type="evidence" value="ECO:0000315"/>
    <property type="project" value="MGI"/>
</dbReference>
<dbReference type="GO" id="GO:2000179">
    <property type="term" value="P:positive regulation of neural precursor cell proliferation"/>
    <property type="evidence" value="ECO:0000315"/>
    <property type="project" value="UniProtKB"/>
</dbReference>
<dbReference type="GO" id="GO:0051726">
    <property type="term" value="P:regulation of cell cycle"/>
    <property type="evidence" value="ECO:0000250"/>
    <property type="project" value="UniProtKB"/>
</dbReference>
<dbReference type="GO" id="GO:0010468">
    <property type="term" value="P:regulation of gene expression"/>
    <property type="evidence" value="ECO:0000315"/>
    <property type="project" value="UniProtKB"/>
</dbReference>
<dbReference type="GO" id="GO:0043254">
    <property type="term" value="P:regulation of protein-containing complex assembly"/>
    <property type="evidence" value="ECO:0000250"/>
    <property type="project" value="UniProtKB"/>
</dbReference>
<dbReference type="GO" id="GO:0061549">
    <property type="term" value="P:sympathetic ganglion development"/>
    <property type="evidence" value="ECO:0000315"/>
    <property type="project" value="UniProtKB"/>
</dbReference>
<dbReference type="GO" id="GO:0060290">
    <property type="term" value="P:transdifferentiation"/>
    <property type="evidence" value="ECO:0000250"/>
    <property type="project" value="UniProtKB"/>
</dbReference>
<dbReference type="GO" id="GO:0003323">
    <property type="term" value="P:type B pancreatic cell development"/>
    <property type="evidence" value="ECO:0000315"/>
    <property type="project" value="MGI"/>
</dbReference>
<dbReference type="GO" id="GO:0003309">
    <property type="term" value="P:type B pancreatic cell differentiation"/>
    <property type="evidence" value="ECO:0000314"/>
    <property type="project" value="UniProtKB"/>
</dbReference>
<dbReference type="FunFam" id="3.30.160.60:FF:001458">
    <property type="entry name" value="INSM transcriptional repressor 1"/>
    <property type="match status" value="1"/>
</dbReference>
<dbReference type="FunFam" id="3.30.160.60:FF:002055">
    <property type="entry name" value="INSM transcriptional repressor 1"/>
    <property type="match status" value="1"/>
</dbReference>
<dbReference type="FunFam" id="3.30.160.60:FF:000488">
    <property type="entry name" value="Insulinoma-associated protein 2"/>
    <property type="match status" value="1"/>
</dbReference>
<dbReference type="Gene3D" id="3.30.160.60">
    <property type="entry name" value="Classic Zinc Finger"/>
    <property type="match status" value="3"/>
</dbReference>
<dbReference type="InterPro" id="IPR042972">
    <property type="entry name" value="INSM1/2"/>
</dbReference>
<dbReference type="InterPro" id="IPR036236">
    <property type="entry name" value="Znf_C2H2_sf"/>
</dbReference>
<dbReference type="InterPro" id="IPR013087">
    <property type="entry name" value="Znf_C2H2_type"/>
</dbReference>
<dbReference type="PANTHER" id="PTHR15065">
    <property type="entry name" value="INSULINOMA-ASSOCIATED 1"/>
    <property type="match status" value="1"/>
</dbReference>
<dbReference type="PANTHER" id="PTHR15065:SF5">
    <property type="entry name" value="INSULINOMA-ASSOCIATED PROTEIN 1"/>
    <property type="match status" value="1"/>
</dbReference>
<dbReference type="Pfam" id="PF00096">
    <property type="entry name" value="zf-C2H2"/>
    <property type="match status" value="4"/>
</dbReference>
<dbReference type="SMART" id="SM00355">
    <property type="entry name" value="ZnF_C2H2"/>
    <property type="match status" value="5"/>
</dbReference>
<dbReference type="SUPFAM" id="SSF57667">
    <property type="entry name" value="beta-beta-alpha zinc fingers"/>
    <property type="match status" value="3"/>
</dbReference>
<dbReference type="PROSITE" id="PS00028">
    <property type="entry name" value="ZINC_FINGER_C2H2_1"/>
    <property type="match status" value="4"/>
</dbReference>
<dbReference type="PROSITE" id="PS50157">
    <property type="entry name" value="ZINC_FINGER_C2H2_2"/>
    <property type="match status" value="4"/>
</dbReference>
<organism>
    <name type="scientific">Mus musculus</name>
    <name type="common">Mouse</name>
    <dbReference type="NCBI Taxonomy" id="10090"/>
    <lineage>
        <taxon>Eukaryota</taxon>
        <taxon>Metazoa</taxon>
        <taxon>Chordata</taxon>
        <taxon>Craniata</taxon>
        <taxon>Vertebrata</taxon>
        <taxon>Euteleostomi</taxon>
        <taxon>Mammalia</taxon>
        <taxon>Eutheria</taxon>
        <taxon>Euarchontoglires</taxon>
        <taxon>Glires</taxon>
        <taxon>Rodentia</taxon>
        <taxon>Myomorpha</taxon>
        <taxon>Muroidea</taxon>
        <taxon>Muridae</taxon>
        <taxon>Murinae</taxon>
        <taxon>Mus</taxon>
        <taxon>Mus</taxon>
    </lineage>
</organism>
<comment type="function">
    <text evidence="2 7 8 9 10 11">Sequence-specific DNA-binding transcriptional regulator that plays a key role in neurogenesis and neuroendocrine cell differentiation during embryonic and/or fetal development. Binds to the consensus sequence 5'-[TG][TC][TC][TT][GA]GGG[CG]A-3' in target promoters. Acts as a transcriptional repressor of NEUROD1 and INS expression via its interaction with cyclin CCND1 in a cell cycle-independent manner. Negatively regulates skeletal muscle-specific gene expression in endocrine cells of the pituitary by inhibiting the Notch signaling pathway. Represses target gene transcription by recruiting chromatin-modifying factors, such as HDAC1, HDAC2, HDAC3, KDM1A and RCOR1 histone deacetylases. Binds to its own promoter, suggesting autoregulation as a self-control feedback mechanism. Competes with histone H3 for the same binding site on the histone demethylase complex formed by KDM1A and RCOR1, and thereby inhibits demethylation of histone H3 at 'Lys-4' (By similarity). Promotes the generation and expansion of neuronal basal progenitor cells in the developing neocortex. Involved in the differentiation of endocrine cells of the developing anterior pituitary gland, of the pancreas and intestine, and of sympatho-adrenal cells in the peripheral nervous system. Promotes cell cycle signaling arrest and inhibition of cellular proliferation.</text>
</comment>
<comment type="subunit">
    <text evidence="2 5 11">Interacts (via the N-terminal region) with CCND1 (via cyclin N-terminal domain); the interaction competes with the binding of CCND1 to CDK4 during cell cycle progression and increases its transcriptional repressor activity. Interacts with HDAC3; the interaction increases its transcriptional repressor activity (By similarity). Interacts (via the SNAG domain) with HDAC1. Interacts (via the SNAG domain) with HDAC2. Interacts (via the SNAG domain) with KDM1A. Interacts (via the SNAG domain) with RCOR1. Interacts with SORBS1.</text>
</comment>
<comment type="subcellular location">
    <subcellularLocation>
        <location evidence="5 11">Nucleus</location>
    </subcellularLocation>
</comment>
<comment type="tissue specificity">
    <text evidence="8 9 10">Expressed in adrenal gland. Expressed in the dentate gyrus of the hippocampus and the wall of the lateral ventricle. Expressed in pancreatic and intestinal endocrine cells.</text>
</comment>
<comment type="developmental stage">
    <text evidence="5 6 7 8 9 10 11">Expressed in differentiating endocrine cells of the anterior pituitary gland between 11.5 and 17.5 dpc. Expressed in all hormone-secreting cell types of the pituitary gland. Expressed in primary sympathetic ganglion chain, spinal cord and in neurons of the dorsal root ganglia at 9.5 dpc. Expressed in chromaffin cells of the adrenal medulla at 13.5 dpc (at protein level). Expressed in the developing central nervous system (CNS). Expressed in midbrain-hindbrain region at 9.5 dpc, in the spinal cord and telencephalon at 11 dpc. Expressed in the forebrain, midbrain, hind brain, spinal cord, cerebellum, olfactory bulb and retina between 11.5 and 14.5 dpc. Expressed in neural stem and progenitor cells of the developing neocortex in both the ventricular zone (VZ) and in the adjacent subventricular zone (SVZ), and in the external granule cell layer of the developing cerebellum between 11 and 16.5 dpc. Expressed in neural progenitor cells at the apical side of the VZ, collectively referred to as apical basal cells (APs; neuroepithelial cells, radial glial cells and short neural precursors) between 10.5 and 16.5 dpc. Expressed in neural progenitor cells in the basal region of the VZ between 10.5 and 16.5 dpc and at later stages in basal progenitor cells (BPs) of the SVZ. Expressed in the cerebellum and pineal gland at 18.5 dpc. Expressed in islet progenitor cells at 10.5 dpc. Expressed in endocrine pancreatic cells, enteric nervous system, duodenum, stomach, thymus, thyroid, adrenal glands at 15.5 dpc.</text>
</comment>
<comment type="domain">
    <text evidence="1">The C-terminal region is necessary for NEUROD1 promoter DNA-binding and transcriptional repressor activity.</text>
</comment>
<comment type="disruption phenotype">
    <text evidence="8 9 10">Mice die during the second half of gestation; lethality is caused by heart failure due to insufficient catecholamine synthesis. Display pancreatic, intestinal and sympatho-adrenal endocrine cell development impairment. Exhibits fewer terminally dividing neuronogenic basal progenitor cells (BPs) in the neocortex.</text>
</comment>
<comment type="similarity">
    <text evidence="12">Belongs to the INSM1 family.</text>
</comment>
<comment type="sequence caution" evidence="12">
    <conflict type="frameshift">
        <sequence resource="EMBL-CDS" id="AAD15718"/>
    </conflict>
</comment>
<evidence type="ECO:0000250" key="1"/>
<evidence type="ECO:0000250" key="2">
    <source>
        <dbReference type="UniProtKB" id="Q01101"/>
    </source>
</evidence>
<evidence type="ECO:0000255" key="3">
    <source>
        <dbReference type="PROSITE-ProRule" id="PRU00042"/>
    </source>
</evidence>
<evidence type="ECO:0000256" key="4">
    <source>
        <dbReference type="SAM" id="MobiDB-lite"/>
    </source>
</evidence>
<evidence type="ECO:0000269" key="5">
    <source>
    </source>
</evidence>
<evidence type="ECO:0000269" key="6">
    <source>
    </source>
</evidence>
<evidence type="ECO:0000269" key="7">
    <source>
    </source>
</evidence>
<evidence type="ECO:0000269" key="8">
    <source>
    </source>
</evidence>
<evidence type="ECO:0000269" key="9">
    <source>
    </source>
</evidence>
<evidence type="ECO:0000269" key="10">
    <source>
    </source>
</evidence>
<evidence type="ECO:0000269" key="11">
    <source>
    </source>
</evidence>
<evidence type="ECO:0000305" key="12"/>
<evidence type="ECO:0000305" key="13">
    <source>
    </source>
</evidence>
<reference key="1">
    <citation type="journal article" date="2002" name="Genomics">
        <title>The zinc-finger transcription factor INSM1 is expressed during embryo development and interacts with the Cbl-associated protein.</title>
        <authorList>
            <person name="Xie J."/>
            <person name="Cai T."/>
            <person name="Zhang H."/>
            <person name="Lan M.S."/>
            <person name="Notkins A.L."/>
        </authorList>
    </citation>
    <scope>NUCLEOTIDE SEQUENCE [MRNA]</scope>
    <scope>INTERACTION WITH SORBS1</scope>
    <scope>DEVELOPMENTAL STAGE</scope>
    <scope>SUBCELLULAR LOCATION</scope>
</reference>
<reference key="2">
    <citation type="journal article" date="2003" name="J. Biol. Chem.">
        <title>NeuroD1/E47 regulates the E-box element of a novel zinc finger transcription factor, IA-1, in developing nervous system.</title>
        <authorList>
            <person name="Breslin M.B."/>
            <person name="Zhu M."/>
            <person name="Lan M.S."/>
        </authorList>
    </citation>
    <scope>DEVELOPMENTAL STAGE</scope>
</reference>
<reference key="3">
    <citation type="journal article" date="2004" name="Genome Res.">
        <title>The status, quality, and expansion of the NIH full-length cDNA project: the Mammalian Gene Collection (MGC).</title>
        <authorList>
            <consortium name="The MGC Project Team"/>
        </authorList>
    </citation>
    <scope>NUCLEOTIDE SEQUENCE [LARGE SCALE MRNA]</scope>
    <source>
        <strain>C57BL/6J</strain>
    </source>
</reference>
<reference key="4">
    <citation type="journal article" date="2006" name="EMBO J.">
        <title>IA1 is NGN3-dependent and essential for differentiation of the endocrine pancreas.</title>
        <authorList>
            <person name="Mellitzer G."/>
            <person name="Bonne S."/>
            <person name="Luco R.F."/>
            <person name="Van De Casteele M."/>
            <person name="Lenne-Samuel N."/>
            <person name="Collombat P."/>
            <person name="Mansouri A."/>
            <person name="Lee J."/>
            <person name="Lan M."/>
            <person name="Pipeleers D."/>
            <person name="Nielsen F.C."/>
            <person name="Ferrer J."/>
            <person name="Gradwohl G."/>
            <person name="Heimberg H."/>
        </authorList>
    </citation>
    <scope>FUNCTION</scope>
    <scope>DEVELOPMENTAL STAGE</scope>
</reference>
<reference key="5">
    <citation type="journal article" date="2006" name="Genes Dev.">
        <title>The zinc-finger factor Insm1 (IA-1) is essential for the development of pancreatic beta cells and intestinal endocrine cells.</title>
        <authorList>
            <person name="Gierl M.S."/>
            <person name="Karoulias N."/>
            <person name="Wende H."/>
            <person name="Strehle M."/>
            <person name="Birchmeier C."/>
        </authorList>
    </citation>
    <scope>FUNCTION</scope>
    <scope>DISRUPTION PHENOTYPE</scope>
    <scope>TISSUE SPECIFICITY</scope>
    <scope>DEVELOPMENTAL STAGE</scope>
</reference>
<reference key="6">
    <citation type="journal article" date="2008" name="Development">
        <title>Insm1 (IA-1) is a crucial component of the transcriptional network that controls differentiation of the sympatho-adrenal lineage.</title>
        <authorList>
            <person name="Wildner H."/>
            <person name="Gierl M.S."/>
            <person name="Strehle M."/>
            <person name="Pla P."/>
            <person name="Birchmeier C."/>
        </authorList>
    </citation>
    <scope>FUNCTION</scope>
    <scope>DISRUPTION PHENOTYPE</scope>
    <scope>TISSUE SPECIFICITY</scope>
    <scope>DEVELOPMENTAL STAGE</scope>
</reference>
<reference key="7">
    <citation type="journal article" date="2008" name="Neuron">
        <title>Insulinoma-associated 1 has a panneurogenic role and promotes the generation and expansion of basal progenitors in the developing mouse neocortex.</title>
        <authorList>
            <person name="Farkas L.M."/>
            <person name="Haffner C."/>
            <person name="Giger T."/>
            <person name="Khaitovich P."/>
            <person name="Nowick K."/>
            <person name="Birchmeier C."/>
            <person name="Paabo S."/>
            <person name="Huttner W.B."/>
        </authorList>
    </citation>
    <scope>FUNCTION</scope>
    <scope>DISRUPTION PHENOTYPE</scope>
    <scope>TISSUE SPECIFICITY</scope>
    <scope>DEVELOPMENTAL STAGE</scope>
</reference>
<reference key="8">
    <citation type="journal article" date="2013" name="Development">
        <title>Insm1 controls development of pituitary endocrine cells and requires a SNAG domain for function and for recruitment of histone-modifying factors.</title>
        <authorList>
            <person name="Welcker J.E."/>
            <person name="Hernandez-Miranda L.R."/>
            <person name="Paul F.E."/>
            <person name="Jia S."/>
            <person name="Ivanov A."/>
            <person name="Selbach M."/>
            <person name="Birchmeier C."/>
        </authorList>
    </citation>
    <scope>FUNCTION</scope>
    <scope>SUBCELLULAR LOCATION</scope>
    <scope>DEVELOPMENTAL STAGE</scope>
    <scope>INTERACTION WITH HDAC1; HDAC2; KDM1A AND RCOR1</scope>
    <scope>DOMAIN</scope>
</reference>
<protein>
    <recommendedName>
        <fullName>Insulinoma-associated protein 1</fullName>
    </recommendedName>
    <alternativeName>
        <fullName>Zinc finger protein IA-1</fullName>
    </alternativeName>
</protein>
<keyword id="KW-0131">Cell cycle</keyword>
<keyword id="KW-0217">Developmental protein</keyword>
<keyword id="KW-0221">Differentiation</keyword>
<keyword id="KW-0238">DNA-binding</keyword>
<keyword id="KW-0479">Metal-binding</keyword>
<keyword id="KW-0524">Neurogenesis</keyword>
<keyword id="KW-0539">Nucleus</keyword>
<keyword id="KW-1185">Reference proteome</keyword>
<keyword id="KW-0677">Repeat</keyword>
<keyword id="KW-0678">Repressor</keyword>
<keyword id="KW-0804">Transcription</keyword>
<keyword id="KW-0805">Transcription regulation</keyword>
<keyword id="KW-0862">Zinc</keyword>
<keyword id="KW-0863">Zinc-finger</keyword>